<name>NS1_I45A0</name>
<keyword id="KW-0025">Alternative splicing</keyword>
<keyword id="KW-1262">Eukaryotic host gene expression shutoff by virus</keyword>
<keyword id="KW-1035">Host cytoplasm</keyword>
<keyword id="KW-1190">Host gene expression shutoff by virus</keyword>
<keyword id="KW-1192">Host mRNA suppression by virus</keyword>
<keyword id="KW-1048">Host nucleus</keyword>
<keyword id="KW-0945">Host-virus interaction</keyword>
<keyword id="KW-1090">Inhibition of host innate immune response by virus</keyword>
<keyword id="KW-1114">Inhibition of host interferon signaling pathway by virus</keyword>
<keyword id="KW-1102">Inhibition of host PKR by virus</keyword>
<keyword id="KW-1103">Inhibition of host pre-mRNA processing by virus</keyword>
<keyword id="KW-1088">Inhibition of host RIG-I by virus</keyword>
<keyword id="KW-1113">Inhibition of host RLR pathway by virus</keyword>
<keyword id="KW-0922">Interferon antiviral system evasion</keyword>
<keyword id="KW-0694">RNA-binding</keyword>
<keyword id="KW-0832">Ubl conjugation</keyword>
<keyword id="KW-0899">Viral immunoevasion</keyword>
<organismHost>
    <name type="scientific">Aves</name>
    <dbReference type="NCBI Taxonomy" id="8782"/>
</organismHost>
<organismHost>
    <name type="scientific">Homo sapiens</name>
    <name type="common">Human</name>
    <dbReference type="NCBI Taxonomy" id="9606"/>
</organismHost>
<organismHost>
    <name type="scientific">Sus scrofa</name>
    <name type="common">Pig</name>
    <dbReference type="NCBI Taxonomy" id="9823"/>
</organismHost>
<gene>
    <name evidence="1" type="primary">NS</name>
</gene>
<dbReference type="EMBL" id="CY021713">
    <property type="protein sequence ID" value="ABP49332.1"/>
    <property type="molecule type" value="Viral_cRNA"/>
</dbReference>
<dbReference type="SMR" id="A4U6V8"/>
<dbReference type="Proteomes" id="UP000008433">
    <property type="component" value="Genome"/>
</dbReference>
<dbReference type="GO" id="GO:0030430">
    <property type="term" value="C:host cell cytoplasm"/>
    <property type="evidence" value="ECO:0007669"/>
    <property type="project" value="UniProtKB-SubCell"/>
</dbReference>
<dbReference type="GO" id="GO:0042025">
    <property type="term" value="C:host cell nucleus"/>
    <property type="evidence" value="ECO:0007669"/>
    <property type="project" value="UniProtKB-SubCell"/>
</dbReference>
<dbReference type="GO" id="GO:0030291">
    <property type="term" value="F:protein serine/threonine kinase inhibitor activity"/>
    <property type="evidence" value="ECO:0007669"/>
    <property type="project" value="UniProtKB-KW"/>
</dbReference>
<dbReference type="GO" id="GO:0003723">
    <property type="term" value="F:RNA binding"/>
    <property type="evidence" value="ECO:0007669"/>
    <property type="project" value="UniProtKB-KW"/>
</dbReference>
<dbReference type="GO" id="GO:0039540">
    <property type="term" value="P:symbiont-mediated suppression of host cytoplasmic pattern recognition receptor signaling pathway via inhibition of RIG-I activity"/>
    <property type="evidence" value="ECO:0007669"/>
    <property type="project" value="UniProtKB-KW"/>
</dbReference>
<dbReference type="GO" id="GO:0039657">
    <property type="term" value="P:symbiont-mediated suppression of host gene expression"/>
    <property type="evidence" value="ECO:0007669"/>
    <property type="project" value="UniProtKB-KW"/>
</dbReference>
<dbReference type="GO" id="GO:0039524">
    <property type="term" value="P:symbiont-mediated suppression of host mRNA processing"/>
    <property type="evidence" value="ECO:0007669"/>
    <property type="project" value="UniProtKB-KW"/>
</dbReference>
<dbReference type="GO" id="GO:0039580">
    <property type="term" value="P:symbiont-mediated suppression of host PKR/eIFalpha signaling"/>
    <property type="evidence" value="ECO:0007669"/>
    <property type="project" value="UniProtKB-KW"/>
</dbReference>
<dbReference type="GO" id="GO:0039502">
    <property type="term" value="P:symbiont-mediated suppression of host type I interferon-mediated signaling pathway"/>
    <property type="evidence" value="ECO:0007669"/>
    <property type="project" value="UniProtKB-KW"/>
</dbReference>
<dbReference type="FunFam" id="1.10.287.10:FF:000001">
    <property type="entry name" value="Non-structural protein 1"/>
    <property type="match status" value="1"/>
</dbReference>
<dbReference type="FunFam" id="3.30.420.330:FF:000001">
    <property type="entry name" value="Non-structural protein 1"/>
    <property type="match status" value="1"/>
</dbReference>
<dbReference type="Gene3D" id="3.30.420.330">
    <property type="entry name" value="Influenza virus non-structural protein, effector domain"/>
    <property type="match status" value="1"/>
</dbReference>
<dbReference type="Gene3D" id="1.10.287.10">
    <property type="entry name" value="S15/NS1, RNA-binding"/>
    <property type="match status" value="1"/>
</dbReference>
<dbReference type="HAMAP" id="MF_04066">
    <property type="entry name" value="INFV_NS1"/>
    <property type="match status" value="1"/>
</dbReference>
<dbReference type="InterPro" id="IPR004208">
    <property type="entry name" value="NS1"/>
</dbReference>
<dbReference type="InterPro" id="IPR000256">
    <property type="entry name" value="NS1A"/>
</dbReference>
<dbReference type="InterPro" id="IPR038064">
    <property type="entry name" value="NS1A_effect_dom-like_sf"/>
</dbReference>
<dbReference type="InterPro" id="IPR009068">
    <property type="entry name" value="uS15_NS1_RNA-bd_sf"/>
</dbReference>
<dbReference type="Pfam" id="PF00600">
    <property type="entry name" value="Flu_NS1"/>
    <property type="match status" value="1"/>
</dbReference>
<dbReference type="SUPFAM" id="SSF143021">
    <property type="entry name" value="Ns1 effector domain-like"/>
    <property type="match status" value="1"/>
</dbReference>
<dbReference type="SUPFAM" id="SSF47060">
    <property type="entry name" value="S15/NS1 RNA-binding domain"/>
    <property type="match status" value="1"/>
</dbReference>
<comment type="function">
    <text evidence="1">Inhibits post-transcriptional processing of cellular pre-mRNA, by binding and inhibiting two cellular proteins that are required for the 3'-end processing of cellular pre-mRNAs: the 30 kDa cleavage and polyadenylation specificity factor/CPSF4 and the poly(A)-binding protein 2/PABPN1. In turn, unprocessed 3' end pre-mRNAs accumulate in the host nucleus and are no longer exported to the cytoplasm. Cellular protein synthesis is thereby shut off very early after virus infection. Viral protein synthesis is not affected by the inhibition of the cellular 3' end processing machinery because the poly(A) tails of viral mRNAs are produced by the viral polymerase through a stuttering mechanism. Prevents the establishment of the cellular antiviral state by inhibiting TRIM25-mediated RIGI ubiquitination, which normally triggers the antiviral transduction signal that leads to the activation of type I IFN genes by transcription factors IRF3 and IRF7. Also binds poly(A) and U6 snRNA. Inhibits the integrated stress response (ISR) in the infected cell by blocking dsRNA binding by EIF2AK2/PKR and further phosphorylation of EIF2S1/EIF-2ALPHA. Stress granule formation is thus inhibited, which allows protein synthesis and viral replication.</text>
</comment>
<comment type="subunit">
    <text evidence="1">Homodimer. Interacts with host TRIM25 (via coiled coil); this interaction specifically inhibits TRIM25 multimerization and TRIM25-mediated RIGI CARD ubiquitination. Interacts with human EIF2AK2/PKR, CPSF4, IVNS1ABP and PABPN1.</text>
</comment>
<comment type="subcellular location">
    <subcellularLocation>
        <location evidence="1">Host nucleus</location>
    </subcellularLocation>
    <subcellularLocation>
        <location evidence="1">Host cytoplasm</location>
    </subcellularLocation>
    <text evidence="1">In uninfected, transfected cells, NS1 is localized in the nucleus. Only in virus infected cells, the nuclear export signal is unveiled, presumably by a viral protein, and a fraction of NS1 is exported in the cytoplasm.</text>
</comment>
<comment type="alternative products">
    <event type="alternative splicing"/>
    <isoform>
        <id>A4U6V8-1</id>
        <name>NS1</name>
        <sequence type="displayed"/>
    </isoform>
    <isoform>
        <id>A4U6V7-1</id>
        <name>NEP</name>
        <name>NS2</name>
        <sequence type="external"/>
    </isoform>
</comment>
<comment type="domain">
    <text evidence="1">The dsRNA-binding region is required for suppression of RNA silencing.</text>
</comment>
<comment type="PTM">
    <text evidence="1">Upon interferon induction, ISGylated via host HERC5; this results in the impairment of NS1 interaction with RNA targets due to its inability to form homodimers and to interact with host EIF2AK2/PKR.</text>
</comment>
<comment type="similarity">
    <text evidence="1">Belongs to the influenza A viruses NS1 family.</text>
</comment>
<protein>
    <recommendedName>
        <fullName evidence="1">Non-structural protein 1</fullName>
        <shortName evidence="1">NS1</shortName>
    </recommendedName>
    <alternativeName>
        <fullName evidence="1">NS1A</fullName>
    </alternativeName>
</protein>
<feature type="chain" id="PRO_0000372984" description="Non-structural protein 1">
    <location>
        <begin position="1"/>
        <end position="230"/>
    </location>
</feature>
<feature type="region of interest" description="RNA-binding and homodimerization" evidence="1">
    <location>
        <begin position="1"/>
        <end position="73"/>
    </location>
</feature>
<feature type="region of interest" description="CPSF4-binding" evidence="1">
    <location>
        <begin position="180"/>
        <end position="215"/>
    </location>
</feature>
<feature type="region of interest" description="Disordered" evidence="2">
    <location>
        <begin position="205"/>
        <end position="230"/>
    </location>
</feature>
<feature type="region of interest" description="PABPN1-binding" evidence="1">
    <location>
        <begin position="223"/>
        <end position="230"/>
    </location>
</feature>
<feature type="short sequence motif" description="Nuclear localization signal" evidence="1">
    <location>
        <begin position="34"/>
        <end position="38"/>
    </location>
</feature>
<feature type="short sequence motif" description="Nuclear export signal" evidence="1">
    <location>
        <begin position="137"/>
        <end position="146"/>
    </location>
</feature>
<proteinExistence type="inferred from homology"/>
<evidence type="ECO:0000255" key="1">
    <source>
        <dbReference type="HAMAP-Rule" id="MF_04066"/>
    </source>
</evidence>
<evidence type="ECO:0000256" key="2">
    <source>
        <dbReference type="SAM" id="MobiDB-lite"/>
    </source>
</evidence>
<reference key="1">
    <citation type="submission" date="2007-04" db="EMBL/GenBank/DDBJ databases">
        <title>The NIAID influenza genome sequencing project.</title>
        <authorList>
            <person name="Ghedin E."/>
            <person name="Spiro D."/>
            <person name="Miller N."/>
            <person name="Zaborsky J."/>
            <person name="Feldblyum T."/>
            <person name="Subbu V."/>
            <person name="Shumway M."/>
            <person name="Sparenborg J."/>
            <person name="Groveman L."/>
            <person name="Halpin R."/>
            <person name="Sitz J."/>
            <person name="Koo H."/>
            <person name="Salzberg S.L."/>
            <person name="Webster R.G."/>
            <person name="Hoffmann E."/>
            <person name="Krauss S."/>
            <person name="Naeve C."/>
            <person name="Bao Y."/>
            <person name="Bolotov P."/>
            <person name="Dernovoy D."/>
            <person name="Kiryutin B."/>
            <person name="Lipman D.J."/>
            <person name="Tatusova T."/>
        </authorList>
    </citation>
    <scope>NUCLEOTIDE SEQUENCE [GENOMIC RNA]</scope>
</reference>
<reference key="2">
    <citation type="submission" date="2007-04" db="EMBL/GenBank/DDBJ databases">
        <authorList>
            <consortium name="The NIAID Influenza Genome Sequencing Consortium"/>
        </authorList>
    </citation>
    <scope>NUCLEOTIDE SEQUENCE [GENOMIC RNA]</scope>
</reference>
<sequence>MDPNTVSSFQVDCFLWHVRKRVADQELGDAPFLDRLRRDQKSLRGRGSTLGLNIETATRVGKQIVERILKEESDEALKMTMASALASRYLTDMTIEEMSRDWFMLMPKQKVAGPLCIRMDQAIMDKSIILKANFSVIFGRLETLILLRAFTEEGAIVGEISPLPSLPGHTNEDVKNAIGVLIGGLEWNDNTVRVSKTLQRFAWRSSNENGRPPLTPKQKRKMARTIRSEV</sequence>
<organism>
    <name type="scientific">Influenza A virus (strain A/USA:Huston/AA/1945 H1N1)</name>
    <dbReference type="NCBI Taxonomy" id="425551"/>
    <lineage>
        <taxon>Viruses</taxon>
        <taxon>Riboviria</taxon>
        <taxon>Orthornavirae</taxon>
        <taxon>Negarnaviricota</taxon>
        <taxon>Polyploviricotina</taxon>
        <taxon>Insthoviricetes</taxon>
        <taxon>Articulavirales</taxon>
        <taxon>Orthomyxoviridae</taxon>
        <taxon>Alphainfluenzavirus</taxon>
        <taxon>Alphainfluenzavirus influenzae</taxon>
        <taxon>Influenza A virus</taxon>
    </lineage>
</organism>
<accession>A4U6V8</accession>